<protein>
    <recommendedName>
        <fullName>Pentatricopeptide repeat-containing protein At1g13040, mitochondrial</fullName>
    </recommendedName>
</protein>
<name>PPR40_ARATH</name>
<reference key="1">
    <citation type="journal article" date="2000" name="Nature">
        <title>Sequence and analysis of chromosome 1 of the plant Arabidopsis thaliana.</title>
        <authorList>
            <person name="Theologis A."/>
            <person name="Ecker J.R."/>
            <person name="Palm C.J."/>
            <person name="Federspiel N.A."/>
            <person name="Kaul S."/>
            <person name="White O."/>
            <person name="Alonso J."/>
            <person name="Altafi H."/>
            <person name="Araujo R."/>
            <person name="Bowman C.L."/>
            <person name="Brooks S.Y."/>
            <person name="Buehler E."/>
            <person name="Chan A."/>
            <person name="Chao Q."/>
            <person name="Chen H."/>
            <person name="Cheuk R.F."/>
            <person name="Chin C.W."/>
            <person name="Chung M.K."/>
            <person name="Conn L."/>
            <person name="Conway A.B."/>
            <person name="Conway A.R."/>
            <person name="Creasy T.H."/>
            <person name="Dewar K."/>
            <person name="Dunn P."/>
            <person name="Etgu P."/>
            <person name="Feldblyum T.V."/>
            <person name="Feng J.-D."/>
            <person name="Fong B."/>
            <person name="Fujii C.Y."/>
            <person name="Gill J.E."/>
            <person name="Goldsmith A.D."/>
            <person name="Haas B."/>
            <person name="Hansen N.F."/>
            <person name="Hughes B."/>
            <person name="Huizar L."/>
            <person name="Hunter J.L."/>
            <person name="Jenkins J."/>
            <person name="Johnson-Hopson C."/>
            <person name="Khan S."/>
            <person name="Khaykin E."/>
            <person name="Kim C.J."/>
            <person name="Koo H.L."/>
            <person name="Kremenetskaia I."/>
            <person name="Kurtz D.B."/>
            <person name="Kwan A."/>
            <person name="Lam B."/>
            <person name="Langin-Hooper S."/>
            <person name="Lee A."/>
            <person name="Lee J.M."/>
            <person name="Lenz C.A."/>
            <person name="Li J.H."/>
            <person name="Li Y.-P."/>
            <person name="Lin X."/>
            <person name="Liu S.X."/>
            <person name="Liu Z.A."/>
            <person name="Luros J.S."/>
            <person name="Maiti R."/>
            <person name="Marziali A."/>
            <person name="Militscher J."/>
            <person name="Miranda M."/>
            <person name="Nguyen M."/>
            <person name="Nierman W.C."/>
            <person name="Osborne B.I."/>
            <person name="Pai G."/>
            <person name="Peterson J."/>
            <person name="Pham P.K."/>
            <person name="Rizzo M."/>
            <person name="Rooney T."/>
            <person name="Rowley D."/>
            <person name="Sakano H."/>
            <person name="Salzberg S.L."/>
            <person name="Schwartz J.R."/>
            <person name="Shinn P."/>
            <person name="Southwick A.M."/>
            <person name="Sun H."/>
            <person name="Tallon L.J."/>
            <person name="Tambunga G."/>
            <person name="Toriumi M.J."/>
            <person name="Town C.D."/>
            <person name="Utterback T."/>
            <person name="Van Aken S."/>
            <person name="Vaysberg M."/>
            <person name="Vysotskaia V.S."/>
            <person name="Walker M."/>
            <person name="Wu D."/>
            <person name="Yu G."/>
            <person name="Fraser C.M."/>
            <person name="Venter J.C."/>
            <person name="Davis R.W."/>
        </authorList>
    </citation>
    <scope>NUCLEOTIDE SEQUENCE [LARGE SCALE GENOMIC DNA]</scope>
    <source>
        <strain>cv. Columbia</strain>
    </source>
</reference>
<reference key="2">
    <citation type="journal article" date="2017" name="Plant J.">
        <title>Araport11: a complete reannotation of the Arabidopsis thaliana reference genome.</title>
        <authorList>
            <person name="Cheng C.Y."/>
            <person name="Krishnakumar V."/>
            <person name="Chan A.P."/>
            <person name="Thibaud-Nissen F."/>
            <person name="Schobel S."/>
            <person name="Town C.D."/>
        </authorList>
    </citation>
    <scope>GENOME REANNOTATION</scope>
    <source>
        <strain>cv. Columbia</strain>
    </source>
</reference>
<reference key="3">
    <citation type="journal article" date="2004" name="Plant Cell">
        <title>Genome-wide analysis of Arabidopsis pentatricopeptide repeat proteins reveals their essential role in organelle biogenesis.</title>
        <authorList>
            <person name="Lurin C."/>
            <person name="Andres C."/>
            <person name="Aubourg S."/>
            <person name="Bellaoui M."/>
            <person name="Bitton F."/>
            <person name="Bruyere C."/>
            <person name="Caboche M."/>
            <person name="Debast C."/>
            <person name="Gualberto J."/>
            <person name="Hoffmann B."/>
            <person name="Lecharny A."/>
            <person name="Le Ret M."/>
            <person name="Martin-Magniette M.-L."/>
            <person name="Mireau H."/>
            <person name="Peeters N."/>
            <person name="Renou J.-P."/>
            <person name="Szurek B."/>
            <person name="Taconnat L."/>
            <person name="Small I."/>
        </authorList>
    </citation>
    <scope>GENE FAMILY</scope>
</reference>
<proteinExistence type="evidence at transcript level"/>
<gene>
    <name type="ordered locus">At1g13040</name>
    <name type="ORF">F3F19.6</name>
</gene>
<organism>
    <name type="scientific">Arabidopsis thaliana</name>
    <name type="common">Mouse-ear cress</name>
    <dbReference type="NCBI Taxonomy" id="3702"/>
    <lineage>
        <taxon>Eukaryota</taxon>
        <taxon>Viridiplantae</taxon>
        <taxon>Streptophyta</taxon>
        <taxon>Embryophyta</taxon>
        <taxon>Tracheophyta</taxon>
        <taxon>Spermatophyta</taxon>
        <taxon>Magnoliopsida</taxon>
        <taxon>eudicotyledons</taxon>
        <taxon>Gunneridae</taxon>
        <taxon>Pentapetalae</taxon>
        <taxon>rosids</taxon>
        <taxon>malvids</taxon>
        <taxon>Brassicales</taxon>
        <taxon>Brassicaceae</taxon>
        <taxon>Camelineae</taxon>
        <taxon>Arabidopsis</taxon>
    </lineage>
</organism>
<dbReference type="EMBL" id="AC007357">
    <property type="protein sequence ID" value="AAD31057.1"/>
    <property type="molecule type" value="Genomic_DNA"/>
</dbReference>
<dbReference type="EMBL" id="CP002684">
    <property type="protein sequence ID" value="AEE28962.1"/>
    <property type="molecule type" value="Genomic_DNA"/>
</dbReference>
<dbReference type="EMBL" id="CP002684">
    <property type="protein sequence ID" value="ANM61008.1"/>
    <property type="molecule type" value="Genomic_DNA"/>
</dbReference>
<dbReference type="PIR" id="D86264">
    <property type="entry name" value="D86264"/>
</dbReference>
<dbReference type="RefSeq" id="NP_001323253.1">
    <property type="nucleotide sequence ID" value="NM_001332059.1"/>
</dbReference>
<dbReference type="RefSeq" id="NP_172763.1">
    <property type="nucleotide sequence ID" value="NM_101174.2"/>
</dbReference>
<dbReference type="SMR" id="Q9SAD9"/>
<dbReference type="FunCoup" id="Q9SAD9">
    <property type="interactions" value="48"/>
</dbReference>
<dbReference type="STRING" id="3702.Q9SAD9"/>
<dbReference type="iPTMnet" id="Q9SAD9"/>
<dbReference type="PaxDb" id="3702-AT1G13040.1"/>
<dbReference type="EnsemblPlants" id="AT1G13040.1">
    <property type="protein sequence ID" value="AT1G13040.1"/>
    <property type="gene ID" value="AT1G13040"/>
</dbReference>
<dbReference type="EnsemblPlants" id="AT1G13040.2">
    <property type="protein sequence ID" value="AT1G13040.2"/>
    <property type="gene ID" value="AT1G13040"/>
</dbReference>
<dbReference type="GeneID" id="837861"/>
<dbReference type="Gramene" id="AT1G13040.1">
    <property type="protein sequence ID" value="AT1G13040.1"/>
    <property type="gene ID" value="AT1G13040"/>
</dbReference>
<dbReference type="Gramene" id="AT1G13040.2">
    <property type="protein sequence ID" value="AT1G13040.2"/>
    <property type="gene ID" value="AT1G13040"/>
</dbReference>
<dbReference type="KEGG" id="ath:AT1G13040"/>
<dbReference type="Araport" id="AT1G13040"/>
<dbReference type="TAIR" id="AT1G13040"/>
<dbReference type="eggNOG" id="KOG4197">
    <property type="taxonomic scope" value="Eukaryota"/>
</dbReference>
<dbReference type="HOGENOM" id="CLU_002706_49_0_1"/>
<dbReference type="InParanoid" id="Q9SAD9"/>
<dbReference type="OMA" id="CHARKVD"/>
<dbReference type="PhylomeDB" id="Q9SAD9"/>
<dbReference type="PRO" id="PR:Q9SAD9"/>
<dbReference type="Proteomes" id="UP000006548">
    <property type="component" value="Chromosome 1"/>
</dbReference>
<dbReference type="ExpressionAtlas" id="Q9SAD9">
    <property type="expression patterns" value="baseline and differential"/>
</dbReference>
<dbReference type="GO" id="GO:0005739">
    <property type="term" value="C:mitochondrion"/>
    <property type="evidence" value="ECO:0007669"/>
    <property type="project" value="UniProtKB-SubCell"/>
</dbReference>
<dbReference type="GO" id="GO:0000325">
    <property type="term" value="C:plant-type vacuole"/>
    <property type="evidence" value="ECO:0007005"/>
    <property type="project" value="TAIR"/>
</dbReference>
<dbReference type="FunFam" id="1.25.40.10:FF:001714">
    <property type="entry name" value="Pentatricopeptide repeat-containing protein At1g13040, mitochondrial"/>
    <property type="match status" value="1"/>
</dbReference>
<dbReference type="FunFam" id="1.25.40.10:FF:002465">
    <property type="entry name" value="Pentatricopeptide repeat-containing protein At1g13040, mitochondrial"/>
    <property type="match status" value="1"/>
</dbReference>
<dbReference type="Gene3D" id="1.25.40.10">
    <property type="entry name" value="Tetratricopeptide repeat domain"/>
    <property type="match status" value="6"/>
</dbReference>
<dbReference type="InterPro" id="IPR051114">
    <property type="entry name" value="Mito_RNA_Proc_CCM1"/>
</dbReference>
<dbReference type="InterPro" id="IPR002885">
    <property type="entry name" value="Pentatricopeptide_rpt"/>
</dbReference>
<dbReference type="InterPro" id="IPR011990">
    <property type="entry name" value="TPR-like_helical_dom_sf"/>
</dbReference>
<dbReference type="NCBIfam" id="TIGR00756">
    <property type="entry name" value="PPR"/>
    <property type="match status" value="10"/>
</dbReference>
<dbReference type="PANTHER" id="PTHR47934:SF6">
    <property type="entry name" value="MITOCHONDRIAL GROUP I INTRON SPLICING FACTOR CCM1-RELATED"/>
    <property type="match status" value="1"/>
</dbReference>
<dbReference type="PANTHER" id="PTHR47934">
    <property type="entry name" value="PENTATRICOPEPTIDE REPEAT-CONTAINING PROTEIN PET309, MITOCHONDRIAL"/>
    <property type="match status" value="1"/>
</dbReference>
<dbReference type="Pfam" id="PF01535">
    <property type="entry name" value="PPR"/>
    <property type="match status" value="4"/>
</dbReference>
<dbReference type="Pfam" id="PF13041">
    <property type="entry name" value="PPR_2"/>
    <property type="match status" value="4"/>
</dbReference>
<dbReference type="PROSITE" id="PS51375">
    <property type="entry name" value="PPR"/>
    <property type="match status" value="14"/>
</dbReference>
<accession>Q9SAD9</accession>
<feature type="transit peptide" description="Mitochondrion" evidence="1">
    <location>
        <begin position="1"/>
        <end position="57"/>
    </location>
</feature>
<feature type="chain" id="PRO_0000342781" description="Pentatricopeptide repeat-containing protein At1g13040, mitochondrial">
    <location>
        <begin position="58"/>
        <end position="517"/>
    </location>
</feature>
<feature type="repeat" description="PPR 1">
    <location>
        <begin position="8"/>
        <end position="42"/>
    </location>
</feature>
<feature type="repeat" description="PPR 2">
    <location>
        <begin position="43"/>
        <end position="77"/>
    </location>
</feature>
<feature type="repeat" description="PPR 3">
    <location>
        <begin position="78"/>
        <end position="112"/>
    </location>
</feature>
<feature type="repeat" description="PPR 4">
    <location>
        <begin position="113"/>
        <end position="147"/>
    </location>
</feature>
<feature type="repeat" description="PPR 5">
    <location>
        <begin position="148"/>
        <end position="182"/>
    </location>
</feature>
<feature type="repeat" description="PPR 6">
    <location>
        <begin position="183"/>
        <end position="218"/>
    </location>
</feature>
<feature type="repeat" description="PPR 7">
    <location>
        <begin position="219"/>
        <end position="253"/>
    </location>
</feature>
<feature type="repeat" description="PPR 8">
    <location>
        <begin position="254"/>
        <end position="288"/>
    </location>
</feature>
<feature type="repeat" description="PPR 9">
    <location>
        <begin position="289"/>
        <end position="320"/>
    </location>
</feature>
<feature type="repeat" description="PPR 10">
    <location>
        <begin position="324"/>
        <end position="358"/>
    </location>
</feature>
<feature type="repeat" description="PPR 11">
    <location>
        <begin position="359"/>
        <end position="393"/>
    </location>
</feature>
<feature type="repeat" description="PPR 12">
    <location>
        <begin position="394"/>
        <end position="428"/>
    </location>
</feature>
<feature type="repeat" description="PPR 13">
    <location>
        <begin position="429"/>
        <end position="463"/>
    </location>
</feature>
<feature type="repeat" description="PPR 14">
    <location>
        <begin position="464"/>
        <end position="498"/>
    </location>
</feature>
<keyword id="KW-0496">Mitochondrion</keyword>
<keyword id="KW-1185">Reference proteome</keyword>
<keyword id="KW-0677">Repeat</keyword>
<keyword id="KW-0809">Transit peptide</keyword>
<sequence>MHQTLGAVRLAYRSRIANLVKSGMIDNAVQVFDEMRHSSYRVFSFDYNRFIGVLVRESRFELAEAIYWDMKPMGFSLIPFTYSRFISGLCKVKKFDLIDALLSDMETLGFIPDIWAFNVYLDLLCRENKVGFAVQTFFCMVQRGREPDVVSYTILINGLFRAGKVTDAVEIWNAMIRSGVSPDNKACAALVVGLCHARKVDLAYEMVAEEIKSARVKLSTVVYNALISGFCKAGRIEKAEALKSYMSKIGCEPDLVTYNVLLNYYYDNNMLKRAEGVMAEMVRSGIQLDAYSYNQLLKRHCRVSHPDKCYNFMVKEMEPRGFCDVVSYSTLIETFCRASNTRKAYRLFEEMRQKGMVMNVVTYTSLIKAFLREGNSSVAKKLLDQMTELGLSPDRIFYTTILDHLCKSGNVDKAYGVFNDMIEHEITPDAISYNSLISGLCRSGRVTEAIKLFEDMKGKECCPDELTFKFIIGGLIRGKKLSAAYKVWDQMMDKGFTLDRDVSDTLIKASCSMSADA</sequence>
<comment type="subcellular location">
    <subcellularLocation>
        <location evidence="2">Mitochondrion</location>
    </subcellularLocation>
</comment>
<comment type="similarity">
    <text evidence="2">Belongs to the PPR family. P subfamily.</text>
</comment>
<comment type="online information" name="Pentatricopeptide repeat proteins">
    <link uri="https://ppr.plantenergy.uwa.edu.au"/>
</comment>
<evidence type="ECO:0000255" key="1"/>
<evidence type="ECO:0000305" key="2"/>